<feature type="chain" id="PRO_1000195995" description="Large ribosomal subunit protein bL32">
    <location>
        <begin position="1"/>
        <end position="60"/>
    </location>
</feature>
<comment type="similarity">
    <text evidence="1">Belongs to the bacterial ribosomal protein bL32 family.</text>
</comment>
<dbReference type="EMBL" id="CP000918">
    <property type="protein sequence ID" value="ACO16888.1"/>
    <property type="molecule type" value="Genomic_DNA"/>
</dbReference>
<dbReference type="RefSeq" id="WP_000290417.1">
    <property type="nucleotide sequence ID" value="NC_012468.1"/>
</dbReference>
<dbReference type="SMR" id="C1CAX9"/>
<dbReference type="GeneID" id="49598937"/>
<dbReference type="KEGG" id="snm:SP70585_2260"/>
<dbReference type="HOGENOM" id="CLU_129084_2_3_9"/>
<dbReference type="Proteomes" id="UP000002211">
    <property type="component" value="Chromosome"/>
</dbReference>
<dbReference type="GO" id="GO:0015934">
    <property type="term" value="C:large ribosomal subunit"/>
    <property type="evidence" value="ECO:0007669"/>
    <property type="project" value="InterPro"/>
</dbReference>
<dbReference type="GO" id="GO:0003735">
    <property type="term" value="F:structural constituent of ribosome"/>
    <property type="evidence" value="ECO:0007669"/>
    <property type="project" value="InterPro"/>
</dbReference>
<dbReference type="GO" id="GO:0006412">
    <property type="term" value="P:translation"/>
    <property type="evidence" value="ECO:0007669"/>
    <property type="project" value="UniProtKB-UniRule"/>
</dbReference>
<dbReference type="HAMAP" id="MF_00340">
    <property type="entry name" value="Ribosomal_bL32"/>
    <property type="match status" value="1"/>
</dbReference>
<dbReference type="InterPro" id="IPR002677">
    <property type="entry name" value="Ribosomal_bL32"/>
</dbReference>
<dbReference type="InterPro" id="IPR044957">
    <property type="entry name" value="Ribosomal_bL32_bact"/>
</dbReference>
<dbReference type="InterPro" id="IPR011332">
    <property type="entry name" value="Ribosomal_zn-bd"/>
</dbReference>
<dbReference type="NCBIfam" id="TIGR01031">
    <property type="entry name" value="rpmF_bact"/>
    <property type="match status" value="1"/>
</dbReference>
<dbReference type="PANTHER" id="PTHR35534">
    <property type="entry name" value="50S RIBOSOMAL PROTEIN L32"/>
    <property type="match status" value="1"/>
</dbReference>
<dbReference type="PANTHER" id="PTHR35534:SF1">
    <property type="entry name" value="LARGE RIBOSOMAL SUBUNIT PROTEIN BL32"/>
    <property type="match status" value="1"/>
</dbReference>
<dbReference type="Pfam" id="PF01783">
    <property type="entry name" value="Ribosomal_L32p"/>
    <property type="match status" value="1"/>
</dbReference>
<dbReference type="SUPFAM" id="SSF57829">
    <property type="entry name" value="Zn-binding ribosomal proteins"/>
    <property type="match status" value="1"/>
</dbReference>
<sequence length="60" mass="6772">MAVPARRTSKAKKNKRRTHYKVTAPSVNFDETTGDYSRSHRVSLKGYYKGRKIAKAASAE</sequence>
<accession>C1CAX9</accession>
<reference key="1">
    <citation type="journal article" date="2010" name="Genome Biol.">
        <title>Structure and dynamics of the pan-genome of Streptococcus pneumoniae and closely related species.</title>
        <authorList>
            <person name="Donati C."/>
            <person name="Hiller N.L."/>
            <person name="Tettelin H."/>
            <person name="Muzzi A."/>
            <person name="Croucher N.J."/>
            <person name="Angiuoli S.V."/>
            <person name="Oggioni M."/>
            <person name="Dunning Hotopp J.C."/>
            <person name="Hu F.Z."/>
            <person name="Riley D.R."/>
            <person name="Covacci A."/>
            <person name="Mitchell T.J."/>
            <person name="Bentley S.D."/>
            <person name="Kilian M."/>
            <person name="Ehrlich G.D."/>
            <person name="Rappuoli R."/>
            <person name="Moxon E.R."/>
            <person name="Masignani V."/>
        </authorList>
    </citation>
    <scope>NUCLEOTIDE SEQUENCE [LARGE SCALE GENOMIC DNA]</scope>
    <source>
        <strain>70585</strain>
    </source>
</reference>
<keyword id="KW-0687">Ribonucleoprotein</keyword>
<keyword id="KW-0689">Ribosomal protein</keyword>
<organism>
    <name type="scientific">Streptococcus pneumoniae (strain 70585)</name>
    <dbReference type="NCBI Taxonomy" id="488221"/>
    <lineage>
        <taxon>Bacteria</taxon>
        <taxon>Bacillati</taxon>
        <taxon>Bacillota</taxon>
        <taxon>Bacilli</taxon>
        <taxon>Lactobacillales</taxon>
        <taxon>Streptococcaceae</taxon>
        <taxon>Streptococcus</taxon>
    </lineage>
</organism>
<protein>
    <recommendedName>
        <fullName evidence="1">Large ribosomal subunit protein bL32</fullName>
    </recommendedName>
    <alternativeName>
        <fullName evidence="2">50S ribosomal protein L32</fullName>
    </alternativeName>
</protein>
<evidence type="ECO:0000255" key="1">
    <source>
        <dbReference type="HAMAP-Rule" id="MF_00340"/>
    </source>
</evidence>
<evidence type="ECO:0000305" key="2"/>
<name>RL32_STRP7</name>
<gene>
    <name evidence="1" type="primary">rpmF</name>
    <name type="ordered locus">SP70585_2260</name>
</gene>
<proteinExistence type="inferred from homology"/>